<organism>
    <name type="scientific">Homo sapiens</name>
    <name type="common">Human</name>
    <dbReference type="NCBI Taxonomy" id="9606"/>
    <lineage>
        <taxon>Eukaryota</taxon>
        <taxon>Metazoa</taxon>
        <taxon>Chordata</taxon>
        <taxon>Craniata</taxon>
        <taxon>Vertebrata</taxon>
        <taxon>Euteleostomi</taxon>
        <taxon>Mammalia</taxon>
        <taxon>Eutheria</taxon>
        <taxon>Euarchontoglires</taxon>
        <taxon>Primates</taxon>
        <taxon>Haplorrhini</taxon>
        <taxon>Catarrhini</taxon>
        <taxon>Hominidae</taxon>
        <taxon>Homo</taxon>
    </lineage>
</organism>
<sequence>MCSLGLFPPPPPRGQVTLYEHNNELVTGSSYESPPPDFRGQWINLPVLQLTKDPLKTPGRLDHGTRTAFIHHREQVWKRCINIWRDVGLFGVLNEIANSEEEVFEWVKTASGWALALCRWASSLHGSLFPHLSLRSEDLIAEFAQVTNWSSCCLRVFAWHPHTNKFAVALLDDSVRVYNASSTIVPSLKHRLQRNVASLAWKPLSASVLAVACQSCILIWTLDPTSLSTRPSSGCAQVLSHPGHTPVTSLAWAPSGGRLLSASPVDAAIRVWDVSTETCVPLPWFRGGGVTNLLWSPDGSKILATTPSAVFRVWEAQMWTCERWPTLSGRCQTGCWSPDGSRLLFTVLGEPLIYSLSFPERCGEGKGCVGGAKSATIVADLSETTIQTPDGEERLGGEAHSMVWDPSGERLAVLMKGKPRVQDGKPVILLFRTRNSPVFELLPCGIIQGEPGAQPQLITFHPSFNKGALLSVGWSTGRIAHIPLYFVNAQFPRFSPVLGRAQEPPAGGGGSIHDLPLFTETSPTSAPWDPLPGPPPVLPHSPHSHL</sequence>
<reference key="1">
    <citation type="journal article" date="2000" name="Nat. Genet.">
        <title>Mutant WD-repeat protein in triple-A syndrome.</title>
        <authorList>
            <person name="Tullio-Pelet A."/>
            <person name="Salomon R."/>
            <person name="Hadj-Rabia S."/>
            <person name="Mugnier C."/>
            <person name="de Laet M.-H."/>
            <person name="Chaouachi B."/>
            <person name="Bakiri F."/>
            <person name="Brottier P."/>
            <person name="Cattolico L."/>
            <person name="Penet C."/>
            <person name="Begeot M."/>
            <person name="Naville D."/>
            <person name="Nicolino M."/>
            <person name="Chaussain J.-L."/>
            <person name="Weissenbach J."/>
            <person name="Munnich A."/>
            <person name="Lyonnet S."/>
        </authorList>
    </citation>
    <scope>NUCLEOTIDE SEQUENCE [GENOMIC DNA / MRNA] (ISOFORM 1)</scope>
    <scope>FUNCTION</scope>
</reference>
<reference key="2">
    <citation type="journal article" date="2001" name="Hum. Mol. Genet.">
        <title>Triple A syndrome is caused by mutations in AAAS, a new WD-repeat protein gene.</title>
        <authorList>
            <person name="Handschug K."/>
            <person name="Sperling S."/>
            <person name="Yoon S.-J.K."/>
            <person name="Hennig S."/>
            <person name="Clark A.J.L."/>
            <person name="Huebner A."/>
        </authorList>
    </citation>
    <scope>NUCLEOTIDE SEQUENCE [GENOMIC DNA]</scope>
    <scope>VARIANTS AAAS LYS-15; 84-TRP--LEU-546 DEL; ARG-160; PRO-263; 286-ARG--LEU-546 DEL AND 342-ARG--LEU-546 DEL</scope>
    <scope>FUNCTION</scope>
    <scope>TISSUE SPECIFICITY</scope>
</reference>
<reference key="3">
    <citation type="journal article" date="2005" name="Mol. Biol. Rep.">
        <title>Molecular cloning and characterization of AAAS-V2, a novel splice variant of human AAAS.</title>
        <authorList>
            <person name="Li X."/>
            <person name="Ji C."/>
            <person name="Gu J."/>
            <person name="Xu J."/>
            <person name="Jin Z."/>
            <person name="Sun L."/>
            <person name="Zou X."/>
            <person name="Lin Y."/>
            <person name="Sun R."/>
            <person name="Wang P."/>
            <person name="Gu S."/>
            <person name="Mao Y."/>
        </authorList>
    </citation>
    <scope>NUCLEOTIDE SEQUENCE [MRNA] (ISOFORM 2)</scope>
    <scope>FUNCTION</scope>
    <scope>TISSUE SPECIFICITY</scope>
</reference>
<reference key="4">
    <citation type="submission" date="2000-01" db="EMBL/GenBank/DDBJ databases">
        <title>A novel gene expressed in human liver non-tumor tissues.</title>
        <authorList>
            <person name="Li Y."/>
            <person name="Wu T."/>
            <person name="Xu S."/>
            <person name="Ren S."/>
            <person name="Chen Z."/>
            <person name="Han Z."/>
        </authorList>
    </citation>
    <scope>NUCLEOTIDE SEQUENCE [LARGE SCALE MRNA] (ISOFORM 1)</scope>
    <source>
        <tissue>Liver</tissue>
    </source>
</reference>
<reference key="5">
    <citation type="journal article" date="2004" name="Nat. Genet.">
        <title>Complete sequencing and characterization of 21,243 full-length human cDNAs.</title>
        <authorList>
            <person name="Ota T."/>
            <person name="Suzuki Y."/>
            <person name="Nishikawa T."/>
            <person name="Otsuki T."/>
            <person name="Sugiyama T."/>
            <person name="Irie R."/>
            <person name="Wakamatsu A."/>
            <person name="Hayashi K."/>
            <person name="Sato H."/>
            <person name="Nagai K."/>
            <person name="Kimura K."/>
            <person name="Makita H."/>
            <person name="Sekine M."/>
            <person name="Obayashi M."/>
            <person name="Nishi T."/>
            <person name="Shibahara T."/>
            <person name="Tanaka T."/>
            <person name="Ishii S."/>
            <person name="Yamamoto J."/>
            <person name="Saito K."/>
            <person name="Kawai Y."/>
            <person name="Isono Y."/>
            <person name="Nakamura Y."/>
            <person name="Nagahari K."/>
            <person name="Murakami K."/>
            <person name="Yasuda T."/>
            <person name="Iwayanagi T."/>
            <person name="Wagatsuma M."/>
            <person name="Shiratori A."/>
            <person name="Sudo H."/>
            <person name="Hosoiri T."/>
            <person name="Kaku Y."/>
            <person name="Kodaira H."/>
            <person name="Kondo H."/>
            <person name="Sugawara M."/>
            <person name="Takahashi M."/>
            <person name="Kanda K."/>
            <person name="Yokoi T."/>
            <person name="Furuya T."/>
            <person name="Kikkawa E."/>
            <person name="Omura Y."/>
            <person name="Abe K."/>
            <person name="Kamihara K."/>
            <person name="Katsuta N."/>
            <person name="Sato K."/>
            <person name="Tanikawa M."/>
            <person name="Yamazaki M."/>
            <person name="Ninomiya K."/>
            <person name="Ishibashi T."/>
            <person name="Yamashita H."/>
            <person name="Murakawa K."/>
            <person name="Fujimori K."/>
            <person name="Tanai H."/>
            <person name="Kimata M."/>
            <person name="Watanabe M."/>
            <person name="Hiraoka S."/>
            <person name="Chiba Y."/>
            <person name="Ishida S."/>
            <person name="Ono Y."/>
            <person name="Takiguchi S."/>
            <person name="Watanabe S."/>
            <person name="Yosida M."/>
            <person name="Hotuta T."/>
            <person name="Kusano J."/>
            <person name="Kanehori K."/>
            <person name="Takahashi-Fujii A."/>
            <person name="Hara H."/>
            <person name="Tanase T.-O."/>
            <person name="Nomura Y."/>
            <person name="Togiya S."/>
            <person name="Komai F."/>
            <person name="Hara R."/>
            <person name="Takeuchi K."/>
            <person name="Arita M."/>
            <person name="Imose N."/>
            <person name="Musashino K."/>
            <person name="Yuuki H."/>
            <person name="Oshima A."/>
            <person name="Sasaki N."/>
            <person name="Aotsuka S."/>
            <person name="Yoshikawa Y."/>
            <person name="Matsunawa H."/>
            <person name="Ichihara T."/>
            <person name="Shiohata N."/>
            <person name="Sano S."/>
            <person name="Moriya S."/>
            <person name="Momiyama H."/>
            <person name="Satoh N."/>
            <person name="Takami S."/>
            <person name="Terashima Y."/>
            <person name="Suzuki O."/>
            <person name="Nakagawa S."/>
            <person name="Senoh A."/>
            <person name="Mizoguchi H."/>
            <person name="Goto Y."/>
            <person name="Shimizu F."/>
            <person name="Wakebe H."/>
            <person name="Hishigaki H."/>
            <person name="Watanabe T."/>
            <person name="Sugiyama A."/>
            <person name="Takemoto M."/>
            <person name="Kawakami B."/>
            <person name="Yamazaki M."/>
            <person name="Watanabe K."/>
            <person name="Kumagai A."/>
            <person name="Itakura S."/>
            <person name="Fukuzumi Y."/>
            <person name="Fujimori Y."/>
            <person name="Komiyama M."/>
            <person name="Tashiro H."/>
            <person name="Tanigami A."/>
            <person name="Fujiwara T."/>
            <person name="Ono T."/>
            <person name="Yamada K."/>
            <person name="Fujii Y."/>
            <person name="Ozaki K."/>
            <person name="Hirao M."/>
            <person name="Ohmori Y."/>
            <person name="Kawabata A."/>
            <person name="Hikiji T."/>
            <person name="Kobatake N."/>
            <person name="Inagaki H."/>
            <person name="Ikema Y."/>
            <person name="Okamoto S."/>
            <person name="Okitani R."/>
            <person name="Kawakami T."/>
            <person name="Noguchi S."/>
            <person name="Itoh T."/>
            <person name="Shigeta K."/>
            <person name="Senba T."/>
            <person name="Matsumura K."/>
            <person name="Nakajima Y."/>
            <person name="Mizuno T."/>
            <person name="Morinaga M."/>
            <person name="Sasaki M."/>
            <person name="Togashi T."/>
            <person name="Oyama M."/>
            <person name="Hata H."/>
            <person name="Watanabe M."/>
            <person name="Komatsu T."/>
            <person name="Mizushima-Sugano J."/>
            <person name="Satoh T."/>
            <person name="Shirai Y."/>
            <person name="Takahashi Y."/>
            <person name="Nakagawa K."/>
            <person name="Okumura K."/>
            <person name="Nagase T."/>
            <person name="Nomura N."/>
            <person name="Kikuchi H."/>
            <person name="Masuho Y."/>
            <person name="Yamashita R."/>
            <person name="Nakai K."/>
            <person name="Yada T."/>
            <person name="Nakamura Y."/>
            <person name="Ohara O."/>
            <person name="Isogai T."/>
            <person name="Sugano S."/>
        </authorList>
    </citation>
    <scope>NUCLEOTIDE SEQUENCE [LARGE SCALE MRNA] (ISOFORM 1)</scope>
    <source>
        <tissue>Adipose tissue</tissue>
    </source>
</reference>
<reference key="6">
    <citation type="submission" date="2003-05" db="EMBL/GenBank/DDBJ databases">
        <title>Cloning of human full-length CDSs in BD Creator(TM) system donor vector.</title>
        <authorList>
            <person name="Kalnine N."/>
            <person name="Chen X."/>
            <person name="Rolfs A."/>
            <person name="Halleck A."/>
            <person name="Hines L."/>
            <person name="Eisenstein S."/>
            <person name="Koundinya M."/>
            <person name="Raphael J."/>
            <person name="Moreira D."/>
            <person name="Kelley T."/>
            <person name="LaBaer J."/>
            <person name="Lin Y."/>
            <person name="Phelan M."/>
            <person name="Farmer A."/>
        </authorList>
    </citation>
    <scope>NUCLEOTIDE SEQUENCE [LARGE SCALE MRNA] (ISOFORM 1)</scope>
</reference>
<reference key="7">
    <citation type="journal article" date="2006" name="Nature">
        <title>The finished DNA sequence of human chromosome 12.</title>
        <authorList>
            <person name="Scherer S.E."/>
            <person name="Muzny D.M."/>
            <person name="Buhay C.J."/>
            <person name="Chen R."/>
            <person name="Cree A."/>
            <person name="Ding Y."/>
            <person name="Dugan-Rocha S."/>
            <person name="Gill R."/>
            <person name="Gunaratne P."/>
            <person name="Harris R.A."/>
            <person name="Hawes A.C."/>
            <person name="Hernandez J."/>
            <person name="Hodgson A.V."/>
            <person name="Hume J."/>
            <person name="Jackson A."/>
            <person name="Khan Z.M."/>
            <person name="Kovar-Smith C."/>
            <person name="Lewis L.R."/>
            <person name="Lozado R.J."/>
            <person name="Metzker M.L."/>
            <person name="Milosavljevic A."/>
            <person name="Miner G.R."/>
            <person name="Montgomery K.T."/>
            <person name="Morgan M.B."/>
            <person name="Nazareth L.V."/>
            <person name="Scott G."/>
            <person name="Sodergren E."/>
            <person name="Song X.-Z."/>
            <person name="Steffen D."/>
            <person name="Lovering R.C."/>
            <person name="Wheeler D.A."/>
            <person name="Worley K.C."/>
            <person name="Yuan Y."/>
            <person name="Zhang Z."/>
            <person name="Adams C.Q."/>
            <person name="Ansari-Lari M.A."/>
            <person name="Ayele M."/>
            <person name="Brown M.J."/>
            <person name="Chen G."/>
            <person name="Chen Z."/>
            <person name="Clerc-Blankenburg K.P."/>
            <person name="Davis C."/>
            <person name="Delgado O."/>
            <person name="Dinh H.H."/>
            <person name="Draper H."/>
            <person name="Gonzalez-Garay M.L."/>
            <person name="Havlak P."/>
            <person name="Jackson L.R."/>
            <person name="Jacob L.S."/>
            <person name="Kelly S.H."/>
            <person name="Li L."/>
            <person name="Li Z."/>
            <person name="Liu J."/>
            <person name="Liu W."/>
            <person name="Lu J."/>
            <person name="Maheshwari M."/>
            <person name="Nguyen B.-V."/>
            <person name="Okwuonu G.O."/>
            <person name="Pasternak S."/>
            <person name="Perez L.M."/>
            <person name="Plopper F.J.H."/>
            <person name="Santibanez J."/>
            <person name="Shen H."/>
            <person name="Tabor P.E."/>
            <person name="Verduzco D."/>
            <person name="Waldron L."/>
            <person name="Wang Q."/>
            <person name="Williams G.A."/>
            <person name="Zhang J."/>
            <person name="Zhou J."/>
            <person name="Allen C.C."/>
            <person name="Amin A.G."/>
            <person name="Anyalebechi V."/>
            <person name="Bailey M."/>
            <person name="Barbaria J.A."/>
            <person name="Bimage K.E."/>
            <person name="Bryant N.P."/>
            <person name="Burch P.E."/>
            <person name="Burkett C.E."/>
            <person name="Burrell K.L."/>
            <person name="Calderon E."/>
            <person name="Cardenas V."/>
            <person name="Carter K."/>
            <person name="Casias K."/>
            <person name="Cavazos I."/>
            <person name="Cavazos S.R."/>
            <person name="Ceasar H."/>
            <person name="Chacko J."/>
            <person name="Chan S.N."/>
            <person name="Chavez D."/>
            <person name="Christopoulos C."/>
            <person name="Chu J."/>
            <person name="Cockrell R."/>
            <person name="Cox C.D."/>
            <person name="Dang M."/>
            <person name="Dathorne S.R."/>
            <person name="David R."/>
            <person name="Davis C.M."/>
            <person name="Davy-Carroll L."/>
            <person name="Deshazo D.R."/>
            <person name="Donlin J.E."/>
            <person name="D'Souza L."/>
            <person name="Eaves K.A."/>
            <person name="Egan A."/>
            <person name="Emery-Cohen A.J."/>
            <person name="Escotto M."/>
            <person name="Flagg N."/>
            <person name="Forbes L.D."/>
            <person name="Gabisi A.M."/>
            <person name="Garza M."/>
            <person name="Hamilton C."/>
            <person name="Henderson N."/>
            <person name="Hernandez O."/>
            <person name="Hines S."/>
            <person name="Hogues M.E."/>
            <person name="Huang M."/>
            <person name="Idlebird D.G."/>
            <person name="Johnson R."/>
            <person name="Jolivet A."/>
            <person name="Jones S."/>
            <person name="Kagan R."/>
            <person name="King L.M."/>
            <person name="Leal B."/>
            <person name="Lebow H."/>
            <person name="Lee S."/>
            <person name="LeVan J.M."/>
            <person name="Lewis L.C."/>
            <person name="London P."/>
            <person name="Lorensuhewa L.M."/>
            <person name="Loulseged H."/>
            <person name="Lovett D.A."/>
            <person name="Lucier A."/>
            <person name="Lucier R.L."/>
            <person name="Ma J."/>
            <person name="Madu R.C."/>
            <person name="Mapua P."/>
            <person name="Martindale A.D."/>
            <person name="Martinez E."/>
            <person name="Massey E."/>
            <person name="Mawhiney S."/>
            <person name="Meador M.G."/>
            <person name="Mendez S."/>
            <person name="Mercado C."/>
            <person name="Mercado I.C."/>
            <person name="Merritt C.E."/>
            <person name="Miner Z.L."/>
            <person name="Minja E."/>
            <person name="Mitchell T."/>
            <person name="Mohabbat F."/>
            <person name="Mohabbat K."/>
            <person name="Montgomery B."/>
            <person name="Moore N."/>
            <person name="Morris S."/>
            <person name="Munidasa M."/>
            <person name="Ngo R.N."/>
            <person name="Nguyen N.B."/>
            <person name="Nickerson E."/>
            <person name="Nwaokelemeh O.O."/>
            <person name="Nwokenkwo S."/>
            <person name="Obregon M."/>
            <person name="Oguh M."/>
            <person name="Oragunye N."/>
            <person name="Oviedo R.J."/>
            <person name="Parish B.J."/>
            <person name="Parker D.N."/>
            <person name="Parrish J."/>
            <person name="Parks K.L."/>
            <person name="Paul H.A."/>
            <person name="Payton B.A."/>
            <person name="Perez A."/>
            <person name="Perrin W."/>
            <person name="Pickens A."/>
            <person name="Primus E.L."/>
            <person name="Pu L.-L."/>
            <person name="Puazo M."/>
            <person name="Quiles M.M."/>
            <person name="Quiroz J.B."/>
            <person name="Rabata D."/>
            <person name="Reeves K."/>
            <person name="Ruiz S.J."/>
            <person name="Shao H."/>
            <person name="Sisson I."/>
            <person name="Sonaike T."/>
            <person name="Sorelle R.P."/>
            <person name="Sutton A.E."/>
            <person name="Svatek A.F."/>
            <person name="Svetz L.A."/>
            <person name="Tamerisa K.S."/>
            <person name="Taylor T.R."/>
            <person name="Teague B."/>
            <person name="Thomas N."/>
            <person name="Thorn R.D."/>
            <person name="Trejos Z.Y."/>
            <person name="Trevino B.K."/>
            <person name="Ukegbu O.N."/>
            <person name="Urban J.B."/>
            <person name="Vasquez L.I."/>
            <person name="Vera V.A."/>
            <person name="Villasana D.M."/>
            <person name="Wang L."/>
            <person name="Ward-Moore S."/>
            <person name="Warren J.T."/>
            <person name="Wei X."/>
            <person name="White F."/>
            <person name="Williamson A.L."/>
            <person name="Wleczyk R."/>
            <person name="Wooden H.S."/>
            <person name="Wooden S.H."/>
            <person name="Yen J."/>
            <person name="Yoon L."/>
            <person name="Yoon V."/>
            <person name="Zorrilla S.E."/>
            <person name="Nelson D."/>
            <person name="Kucherlapati R."/>
            <person name="Weinstock G."/>
            <person name="Gibbs R.A."/>
        </authorList>
    </citation>
    <scope>NUCLEOTIDE SEQUENCE [LARGE SCALE GENOMIC DNA]</scope>
</reference>
<reference key="8">
    <citation type="journal article" date="2004" name="Genome Res.">
        <title>The status, quality, and expansion of the NIH full-length cDNA project: the Mammalian Gene Collection (MGC).</title>
        <authorList>
            <consortium name="The MGC Project Team"/>
        </authorList>
    </citation>
    <scope>NUCLEOTIDE SEQUENCE [LARGE SCALE MRNA] (ISOFORM 1)</scope>
    <source>
        <tissue>Kidney</tissue>
    </source>
</reference>
<reference key="9">
    <citation type="journal article" date="2007" name="BMC Genomics">
        <title>The full-ORF clone resource of the German cDNA consortium.</title>
        <authorList>
            <person name="Bechtel S."/>
            <person name="Rosenfelder H."/>
            <person name="Duda A."/>
            <person name="Schmidt C.P."/>
            <person name="Ernst U."/>
            <person name="Wellenreuther R."/>
            <person name="Mehrle A."/>
            <person name="Schuster C."/>
            <person name="Bahr A."/>
            <person name="Bloecker H."/>
            <person name="Heubner D."/>
            <person name="Hoerlein A."/>
            <person name="Michel G."/>
            <person name="Wedler H."/>
            <person name="Koehrer K."/>
            <person name="Ottenwaelder B."/>
            <person name="Poustka A."/>
            <person name="Wiemann S."/>
            <person name="Schupp I."/>
        </authorList>
    </citation>
    <scope>NUCLEOTIDE SEQUENCE [LARGE SCALE MRNA] OF 210-546 (ISOFORM 1)</scope>
    <source>
        <tissue>Uterus</tissue>
    </source>
</reference>
<reference key="10">
    <citation type="journal article" date="2008" name="Proc. Natl. Acad. Sci. U.S.A.">
        <title>A quantitative atlas of mitotic phosphorylation.</title>
        <authorList>
            <person name="Dephoure N."/>
            <person name="Zhou C."/>
            <person name="Villen J."/>
            <person name="Beausoleil S.A."/>
            <person name="Bakalarski C.E."/>
            <person name="Elledge S.J."/>
            <person name="Gygi S.P."/>
        </authorList>
    </citation>
    <scope>PHOSPHORYLATION [LARGE SCALE ANALYSIS] AT SER-33</scope>
    <scope>IDENTIFICATION BY MASS SPECTROMETRY [LARGE SCALE ANALYSIS]</scope>
    <source>
        <tissue>Cervix carcinoma</tissue>
    </source>
</reference>
<reference key="11">
    <citation type="journal article" date="2009" name="Biochem. Biophys. Res. Commun.">
        <title>The nuclear pore complex protein ALADIN is anchored via NDC1 but not via POM121 and GP210 in the nuclear envelope.</title>
        <authorList>
            <person name="Kind B."/>
            <person name="Koehler K."/>
            <person name="Lorenz M."/>
            <person name="Huebner A."/>
        </authorList>
    </citation>
    <scope>SUBCELLULAR LOCATION</scope>
    <scope>INTERACTION WITH NDC1</scope>
</reference>
<reference key="12">
    <citation type="journal article" date="2010" name="Sci. Signal.">
        <title>Quantitative phosphoproteomics reveals widespread full phosphorylation site occupancy during mitosis.</title>
        <authorList>
            <person name="Olsen J.V."/>
            <person name="Vermeulen M."/>
            <person name="Santamaria A."/>
            <person name="Kumar C."/>
            <person name="Miller M.L."/>
            <person name="Jensen L.J."/>
            <person name="Gnad F."/>
            <person name="Cox J."/>
            <person name="Jensen T.S."/>
            <person name="Nigg E.A."/>
            <person name="Brunak S."/>
            <person name="Mann M."/>
        </authorList>
    </citation>
    <scope>PHOSPHORYLATION [LARGE SCALE ANALYSIS] AT SER-33 AND SER-495</scope>
    <scope>IDENTIFICATION BY MASS SPECTROMETRY [LARGE SCALE ANALYSIS]</scope>
    <source>
        <tissue>Cervix carcinoma</tissue>
    </source>
</reference>
<reference key="13">
    <citation type="journal article" date="2011" name="BMC Syst. Biol.">
        <title>Initial characterization of the human central proteome.</title>
        <authorList>
            <person name="Burkard T.R."/>
            <person name="Planyavsky M."/>
            <person name="Kaupe I."/>
            <person name="Breitwieser F.P."/>
            <person name="Buerckstuemmer T."/>
            <person name="Bennett K.L."/>
            <person name="Superti-Furga G."/>
            <person name="Colinge J."/>
        </authorList>
    </citation>
    <scope>IDENTIFICATION BY MASS SPECTROMETRY [LARGE SCALE ANALYSIS]</scope>
</reference>
<reference key="14">
    <citation type="journal article" date="2012" name="Mol. Cell. Proteomics">
        <title>Comparative large-scale characterisation of plant vs. mammal proteins reveals similar and idiosyncratic N-alpha acetylation features.</title>
        <authorList>
            <person name="Bienvenut W.V."/>
            <person name="Sumpton D."/>
            <person name="Martinez A."/>
            <person name="Lilla S."/>
            <person name="Espagne C."/>
            <person name="Meinnel T."/>
            <person name="Giglione C."/>
        </authorList>
    </citation>
    <scope>ACETYLATION [LARGE SCALE ANALYSIS] AT CYS-2</scope>
    <scope>CLEAVAGE OF INITIATOR METHIONINE [LARGE SCALE ANALYSIS]</scope>
    <scope>IDENTIFICATION BY MASS SPECTROMETRY [LARGE SCALE ANALYSIS]</scope>
</reference>
<reference key="15">
    <citation type="journal article" date="2012" name="Proc. Natl. Acad. Sci. U.S.A.">
        <title>N-terminal acetylome analyses and functional insights of the N-terminal acetyltransferase NatB.</title>
        <authorList>
            <person name="Van Damme P."/>
            <person name="Lasa M."/>
            <person name="Polevoda B."/>
            <person name="Gazquez C."/>
            <person name="Elosegui-Artola A."/>
            <person name="Kim D.S."/>
            <person name="De Juan-Pardo E."/>
            <person name="Demeyer K."/>
            <person name="Hole K."/>
            <person name="Larrea E."/>
            <person name="Timmerman E."/>
            <person name="Prieto J."/>
            <person name="Arnesen T."/>
            <person name="Sherman F."/>
            <person name="Gevaert K."/>
            <person name="Aldabe R."/>
        </authorList>
    </citation>
    <scope>ACETYLATION [LARGE SCALE ANALYSIS] AT CYS-2</scope>
    <scope>CLEAVAGE OF INITIATOR METHIONINE [LARGE SCALE ANALYSIS]</scope>
    <scope>IDENTIFICATION BY MASS SPECTROMETRY [LARGE SCALE ANALYSIS]</scope>
</reference>
<reference key="16">
    <citation type="journal article" date="2014" name="J. Proteomics">
        <title>An enzyme assisted RP-RPLC approach for in-depth analysis of human liver phosphoproteome.</title>
        <authorList>
            <person name="Bian Y."/>
            <person name="Song C."/>
            <person name="Cheng K."/>
            <person name="Dong M."/>
            <person name="Wang F."/>
            <person name="Huang J."/>
            <person name="Sun D."/>
            <person name="Wang L."/>
            <person name="Ye M."/>
            <person name="Zou H."/>
        </authorList>
    </citation>
    <scope>PHOSPHORYLATION [LARGE SCALE ANALYSIS] AT SER-495; SER-511 AND SER-541</scope>
    <scope>IDENTIFICATION BY MASS SPECTROMETRY [LARGE SCALE ANALYSIS]</scope>
    <source>
        <tissue>Liver</tissue>
    </source>
</reference>
<reference key="17">
    <citation type="journal article" date="2015" name="Mol. Biol. Cell">
        <title>The nucleoporin ALADIN regulates Aurora A localization to ensure robust mitotic spindle formation.</title>
        <authorList>
            <person name="Carvalhal S."/>
            <person name="Ribeiro S.A."/>
            <person name="Arocena M."/>
            <person name="Kasciukovic T."/>
            <person name="Temme A."/>
            <person name="Koehler K."/>
            <person name="Huebner A."/>
            <person name="Griffis E.R."/>
        </authorList>
    </citation>
    <scope>FUNCTION</scope>
    <scope>INTERACTION WITH AURKA</scope>
    <scope>SUBCELLULAR LOCATION</scope>
</reference>
<reference key="18">
    <citation type="journal article" date="2015" name="Proteomics">
        <title>N-terminome analysis of the human mitochondrial proteome.</title>
        <authorList>
            <person name="Vaca Jacome A.S."/>
            <person name="Rabilloud T."/>
            <person name="Schaeffer-Reiss C."/>
            <person name="Rompais M."/>
            <person name="Ayoub D."/>
            <person name="Lane L."/>
            <person name="Bairoch A."/>
            <person name="Van Dorsselaer A."/>
            <person name="Carapito C."/>
        </authorList>
    </citation>
    <scope>IDENTIFICATION BY MASS SPECTROMETRY [LARGE SCALE ANALYSIS]</scope>
</reference>
<reference key="19">
    <citation type="journal article" date="2016" name="Biol. Open">
        <title>Identification of a novel putative interaction partner of the nucleoporin ALADIN.</title>
        <authorList>
            <person name="Juehlen R."/>
            <person name="Landgraf D."/>
            <person name="Huebner A."/>
            <person name="Koehler K."/>
        </authorList>
    </citation>
    <scope>INTERACTION WITH PGRMC2</scope>
    <scope>SUBCELLULAR LOCATION</scope>
</reference>
<dbReference type="EMBL" id="AJ289857">
    <property type="protein sequence ID" value="CAC19017.1"/>
    <property type="molecule type" value="mRNA"/>
</dbReference>
<dbReference type="EMBL" id="AJ289841">
    <property type="protein sequence ID" value="CAC19038.1"/>
    <property type="molecule type" value="Genomic_DNA"/>
</dbReference>
<dbReference type="EMBL" id="AJ289842">
    <property type="protein sequence ID" value="CAC19038.1"/>
    <property type="status" value="JOINED"/>
    <property type="molecule type" value="Genomic_DNA"/>
</dbReference>
<dbReference type="EMBL" id="AJ289843">
    <property type="protein sequence ID" value="CAC19038.1"/>
    <property type="status" value="JOINED"/>
    <property type="molecule type" value="Genomic_DNA"/>
</dbReference>
<dbReference type="EMBL" id="AJ289844">
    <property type="protein sequence ID" value="CAC19038.1"/>
    <property type="status" value="JOINED"/>
    <property type="molecule type" value="Genomic_DNA"/>
</dbReference>
<dbReference type="EMBL" id="AJ289845">
    <property type="protein sequence ID" value="CAC19038.1"/>
    <property type="status" value="JOINED"/>
    <property type="molecule type" value="Genomic_DNA"/>
</dbReference>
<dbReference type="EMBL" id="AJ289846">
    <property type="protein sequence ID" value="CAC19038.1"/>
    <property type="status" value="JOINED"/>
    <property type="molecule type" value="Genomic_DNA"/>
</dbReference>
<dbReference type="EMBL" id="AJ289847">
    <property type="protein sequence ID" value="CAC19038.1"/>
    <property type="status" value="JOINED"/>
    <property type="molecule type" value="Genomic_DNA"/>
</dbReference>
<dbReference type="EMBL" id="AJ289848">
    <property type="protein sequence ID" value="CAC19038.1"/>
    <property type="status" value="JOINED"/>
    <property type="molecule type" value="Genomic_DNA"/>
</dbReference>
<dbReference type="EMBL" id="AJ289849">
    <property type="protein sequence ID" value="CAC19038.1"/>
    <property type="status" value="JOINED"/>
    <property type="molecule type" value="Genomic_DNA"/>
</dbReference>
<dbReference type="EMBL" id="AJ289850">
    <property type="protein sequence ID" value="CAC19038.1"/>
    <property type="status" value="JOINED"/>
    <property type="molecule type" value="Genomic_DNA"/>
</dbReference>
<dbReference type="EMBL" id="AJ289851">
    <property type="protein sequence ID" value="CAC19038.1"/>
    <property type="status" value="JOINED"/>
    <property type="molecule type" value="Genomic_DNA"/>
</dbReference>
<dbReference type="EMBL" id="AJ289852">
    <property type="protein sequence ID" value="CAC19038.1"/>
    <property type="status" value="JOINED"/>
    <property type="molecule type" value="Genomic_DNA"/>
</dbReference>
<dbReference type="EMBL" id="AJ289853">
    <property type="protein sequence ID" value="CAC19038.1"/>
    <property type="status" value="JOINED"/>
    <property type="molecule type" value="Genomic_DNA"/>
</dbReference>
<dbReference type="EMBL" id="AJ289854">
    <property type="protein sequence ID" value="CAC19038.1"/>
    <property type="status" value="JOINED"/>
    <property type="molecule type" value="Genomic_DNA"/>
</dbReference>
<dbReference type="EMBL" id="AJ289855">
    <property type="protein sequence ID" value="CAC19038.1"/>
    <property type="status" value="JOINED"/>
    <property type="molecule type" value="Genomic_DNA"/>
</dbReference>
<dbReference type="EMBL" id="AJ289856">
    <property type="protein sequence ID" value="CAC19038.1"/>
    <property type="status" value="JOINED"/>
    <property type="molecule type" value="Genomic_DNA"/>
</dbReference>
<dbReference type="EMBL" id="AJ297977">
    <property type="protein sequence ID" value="CAC17465.1"/>
    <property type="molecule type" value="Genomic_DNA"/>
</dbReference>
<dbReference type="EMBL" id="AY237818">
    <property type="protein sequence ID" value="AAP69911.1"/>
    <property type="molecule type" value="mRNA"/>
</dbReference>
<dbReference type="EMBL" id="AF226048">
    <property type="protein sequence ID" value="AAF86948.1"/>
    <property type="molecule type" value="mRNA"/>
</dbReference>
<dbReference type="EMBL" id="AK000833">
    <property type="protein sequence ID" value="BAA91394.1"/>
    <property type="molecule type" value="mRNA"/>
</dbReference>
<dbReference type="EMBL" id="BT006912">
    <property type="protein sequence ID" value="AAP35558.1"/>
    <property type="molecule type" value="mRNA"/>
</dbReference>
<dbReference type="EMBL" id="AC073611">
    <property type="status" value="NOT_ANNOTATED_CDS"/>
    <property type="molecule type" value="Genomic_DNA"/>
</dbReference>
<dbReference type="EMBL" id="BC000659">
    <property type="protein sequence ID" value="AAH00659.1"/>
    <property type="molecule type" value="mRNA"/>
</dbReference>
<dbReference type="EMBL" id="AL110160">
    <property type="protein sequence ID" value="CAB53665.2"/>
    <property type="molecule type" value="mRNA"/>
</dbReference>
<dbReference type="CCDS" id="CCDS53797.1">
    <molecule id="Q9NRG9-2"/>
</dbReference>
<dbReference type="CCDS" id="CCDS8856.1">
    <molecule id="Q9NRG9-1"/>
</dbReference>
<dbReference type="RefSeq" id="NP_001166937.1">
    <molecule id="Q9NRG9-2"/>
    <property type="nucleotide sequence ID" value="NM_001173466.2"/>
</dbReference>
<dbReference type="RefSeq" id="NP_056480.1">
    <molecule id="Q9NRG9-1"/>
    <property type="nucleotide sequence ID" value="NM_015665.6"/>
</dbReference>
<dbReference type="PDB" id="7R5J">
    <property type="method" value="EM"/>
    <property type="resolution" value="50.00 A"/>
    <property type="chains" value="40/41=1-546"/>
</dbReference>
<dbReference type="PDB" id="7R5K">
    <property type="method" value="EM"/>
    <property type="resolution" value="12.00 A"/>
    <property type="chains" value="40/41=1-546"/>
</dbReference>
<dbReference type="PDBsum" id="7R5J"/>
<dbReference type="PDBsum" id="7R5K"/>
<dbReference type="EMDB" id="EMD-14321"/>
<dbReference type="EMDB" id="EMD-14322"/>
<dbReference type="SMR" id="Q9NRG9"/>
<dbReference type="BioGRID" id="113759">
    <property type="interactions" value="193"/>
</dbReference>
<dbReference type="ComplexPortal" id="CPX-873">
    <property type="entry name" value="Nuclear pore complex"/>
</dbReference>
<dbReference type="CORUM" id="Q9NRG9"/>
<dbReference type="FunCoup" id="Q9NRG9">
    <property type="interactions" value="3767"/>
</dbReference>
<dbReference type="IntAct" id="Q9NRG9">
    <property type="interactions" value="67"/>
</dbReference>
<dbReference type="MINT" id="Q9NRG9"/>
<dbReference type="STRING" id="9606.ENSP00000209873"/>
<dbReference type="TCDB" id="1.I.1.1.3">
    <property type="family name" value="the nuclear pore complex (npc) family"/>
</dbReference>
<dbReference type="GlyGen" id="Q9NRG9">
    <property type="glycosylation" value="2 sites, 1 O-linked glycan (2 sites)"/>
</dbReference>
<dbReference type="iPTMnet" id="Q9NRG9"/>
<dbReference type="PhosphoSitePlus" id="Q9NRG9"/>
<dbReference type="SwissPalm" id="Q9NRG9"/>
<dbReference type="BioMuta" id="AAAS"/>
<dbReference type="DMDM" id="20137527"/>
<dbReference type="jPOST" id="Q9NRG9"/>
<dbReference type="MassIVE" id="Q9NRG9"/>
<dbReference type="PaxDb" id="9606-ENSP00000209873"/>
<dbReference type="PeptideAtlas" id="Q9NRG9"/>
<dbReference type="ProteomicsDB" id="82359">
    <molecule id="Q9NRG9-1"/>
</dbReference>
<dbReference type="ProteomicsDB" id="82360">
    <molecule id="Q9NRG9-2"/>
</dbReference>
<dbReference type="Pumba" id="Q9NRG9"/>
<dbReference type="Antibodypedia" id="27006">
    <property type="antibodies" value="262 antibodies from 32 providers"/>
</dbReference>
<dbReference type="DNASU" id="8086"/>
<dbReference type="Ensembl" id="ENST00000209873.9">
    <molecule id="Q9NRG9-1"/>
    <property type="protein sequence ID" value="ENSP00000209873.4"/>
    <property type="gene ID" value="ENSG00000094914.14"/>
</dbReference>
<dbReference type="Ensembl" id="ENST00000394384.7">
    <molecule id="Q9NRG9-2"/>
    <property type="protein sequence ID" value="ENSP00000377908.3"/>
    <property type="gene ID" value="ENSG00000094914.14"/>
</dbReference>
<dbReference type="Ensembl" id="ENST00000708962.1">
    <molecule id="Q9NRG9-2"/>
    <property type="protein sequence ID" value="ENSP00000517437.1"/>
    <property type="gene ID" value="ENSG00000291836.1"/>
</dbReference>
<dbReference type="Ensembl" id="ENST00000708963.1">
    <molecule id="Q9NRG9-1"/>
    <property type="protein sequence ID" value="ENSP00000517438.1"/>
    <property type="gene ID" value="ENSG00000291836.1"/>
</dbReference>
<dbReference type="GeneID" id="8086"/>
<dbReference type="KEGG" id="hsa:8086"/>
<dbReference type="MANE-Select" id="ENST00000209873.9">
    <property type="protein sequence ID" value="ENSP00000209873.4"/>
    <property type="RefSeq nucleotide sequence ID" value="NM_015665.6"/>
    <property type="RefSeq protein sequence ID" value="NP_056480.1"/>
</dbReference>
<dbReference type="UCSC" id="uc001scr.5">
    <molecule id="Q9NRG9-1"/>
    <property type="organism name" value="human"/>
</dbReference>
<dbReference type="AGR" id="HGNC:13666"/>
<dbReference type="CTD" id="8086"/>
<dbReference type="DisGeNET" id="8086"/>
<dbReference type="GeneCards" id="AAAS"/>
<dbReference type="HGNC" id="HGNC:13666">
    <property type="gene designation" value="AAAS"/>
</dbReference>
<dbReference type="HPA" id="ENSG00000094914">
    <property type="expression patterns" value="Low tissue specificity"/>
</dbReference>
<dbReference type="MalaCards" id="AAAS"/>
<dbReference type="MIM" id="231550">
    <property type="type" value="phenotype"/>
</dbReference>
<dbReference type="MIM" id="605378">
    <property type="type" value="gene"/>
</dbReference>
<dbReference type="neXtProt" id="NX_Q9NRG9"/>
<dbReference type="OpenTargets" id="ENSG00000094914"/>
<dbReference type="Orphanet" id="869">
    <property type="disease" value="Triple A syndrome"/>
</dbReference>
<dbReference type="PharmGKB" id="PA24361"/>
<dbReference type="VEuPathDB" id="HostDB:ENSG00000094914"/>
<dbReference type="eggNOG" id="KOG2139">
    <property type="taxonomic scope" value="Eukaryota"/>
</dbReference>
<dbReference type="GeneTree" id="ENSGT00390000009446"/>
<dbReference type="HOGENOM" id="CLU_027691_0_1_1"/>
<dbReference type="InParanoid" id="Q9NRG9"/>
<dbReference type="OMA" id="FQPLYKD"/>
<dbReference type="OrthoDB" id="411991at2759"/>
<dbReference type="PAN-GO" id="Q9NRG9">
    <property type="GO annotations" value="2 GO annotations based on evolutionary models"/>
</dbReference>
<dbReference type="PhylomeDB" id="Q9NRG9"/>
<dbReference type="TreeFam" id="TF324412"/>
<dbReference type="PathwayCommons" id="Q9NRG9"/>
<dbReference type="Reactome" id="R-HSA-1169408">
    <property type="pathway name" value="ISG15 antiviral mechanism"/>
</dbReference>
<dbReference type="Reactome" id="R-HSA-159227">
    <property type="pathway name" value="Transport of the SLBP independent Mature mRNA"/>
</dbReference>
<dbReference type="Reactome" id="R-HSA-159230">
    <property type="pathway name" value="Transport of the SLBP Dependant Mature mRNA"/>
</dbReference>
<dbReference type="Reactome" id="R-HSA-159231">
    <property type="pathway name" value="Transport of Mature mRNA Derived from an Intronless Transcript"/>
</dbReference>
<dbReference type="Reactome" id="R-HSA-159236">
    <property type="pathway name" value="Transport of Mature mRNA derived from an Intron-Containing Transcript"/>
</dbReference>
<dbReference type="Reactome" id="R-HSA-165054">
    <property type="pathway name" value="Rev-mediated nuclear export of HIV RNA"/>
</dbReference>
<dbReference type="Reactome" id="R-HSA-168271">
    <property type="pathway name" value="Transport of Ribonucleoproteins into the Host Nucleus"/>
</dbReference>
<dbReference type="Reactome" id="R-HSA-168276">
    <property type="pathway name" value="NS1 Mediated Effects on Host Pathways"/>
</dbReference>
<dbReference type="Reactome" id="R-HSA-168325">
    <property type="pathway name" value="Viral Messenger RNA Synthesis"/>
</dbReference>
<dbReference type="Reactome" id="R-HSA-168333">
    <property type="pathway name" value="NEP/NS2 Interacts with the Cellular Export Machinery"/>
</dbReference>
<dbReference type="Reactome" id="R-HSA-170822">
    <property type="pathway name" value="Regulation of Glucokinase by Glucokinase Regulatory Protein"/>
</dbReference>
<dbReference type="Reactome" id="R-HSA-180746">
    <property type="pathway name" value="Nuclear import of Rev protein"/>
</dbReference>
<dbReference type="Reactome" id="R-HSA-180910">
    <property type="pathway name" value="Vpr-mediated nuclear import of PICs"/>
</dbReference>
<dbReference type="Reactome" id="R-HSA-191859">
    <property type="pathway name" value="snRNP Assembly"/>
</dbReference>
<dbReference type="Reactome" id="R-HSA-3108214">
    <property type="pathway name" value="SUMOylation of DNA damage response and repair proteins"/>
</dbReference>
<dbReference type="Reactome" id="R-HSA-3232142">
    <property type="pathway name" value="SUMOylation of ubiquitinylation proteins"/>
</dbReference>
<dbReference type="Reactome" id="R-HSA-3301854">
    <property type="pathway name" value="Nuclear Pore Complex (NPC) Disassembly"/>
</dbReference>
<dbReference type="Reactome" id="R-HSA-3371453">
    <property type="pathway name" value="Regulation of HSF1-mediated heat shock response"/>
</dbReference>
<dbReference type="Reactome" id="R-HSA-4085377">
    <property type="pathway name" value="SUMOylation of SUMOylation proteins"/>
</dbReference>
<dbReference type="Reactome" id="R-HSA-4551638">
    <property type="pathway name" value="SUMOylation of chromatin organization proteins"/>
</dbReference>
<dbReference type="Reactome" id="R-HSA-4570464">
    <property type="pathway name" value="SUMOylation of RNA binding proteins"/>
</dbReference>
<dbReference type="Reactome" id="R-HSA-4615885">
    <property type="pathway name" value="SUMOylation of DNA replication proteins"/>
</dbReference>
<dbReference type="Reactome" id="R-HSA-5578749">
    <property type="pathway name" value="Transcriptional regulation by small RNAs"/>
</dbReference>
<dbReference type="Reactome" id="R-HSA-5619107">
    <property type="pathway name" value="Defective TPR may confer susceptibility towards thyroid papillary carcinoma (TPC)"/>
</dbReference>
<dbReference type="Reactome" id="R-HSA-6784531">
    <property type="pathway name" value="tRNA processing in the nucleus"/>
</dbReference>
<dbReference type="Reactome" id="R-HSA-8980692">
    <property type="pathway name" value="RHOA GTPase cycle"/>
</dbReference>
<dbReference type="Reactome" id="R-HSA-9609690">
    <property type="pathway name" value="HCMV Early Events"/>
</dbReference>
<dbReference type="Reactome" id="R-HSA-9610379">
    <property type="pathway name" value="HCMV Late Events"/>
</dbReference>
<dbReference type="Reactome" id="R-HSA-9705671">
    <property type="pathway name" value="SARS-CoV-2 activates/modulates innate and adaptive immune responses"/>
</dbReference>
<dbReference type="SignaLink" id="Q9NRG9"/>
<dbReference type="SIGNOR" id="Q9NRG9"/>
<dbReference type="BioGRID-ORCS" id="8086">
    <property type="hits" value="177 hits in 1161 CRISPR screens"/>
</dbReference>
<dbReference type="CD-CODE" id="D6A53B8E">
    <property type="entry name" value="Nuclear pore complex"/>
</dbReference>
<dbReference type="ChiTaRS" id="AAAS">
    <property type="organism name" value="human"/>
</dbReference>
<dbReference type="GeneWiki" id="AAAS_(gene)"/>
<dbReference type="GenomeRNAi" id="8086"/>
<dbReference type="Pharos" id="Q9NRG9">
    <property type="development level" value="Tbio"/>
</dbReference>
<dbReference type="PRO" id="PR:Q9NRG9"/>
<dbReference type="Proteomes" id="UP000005640">
    <property type="component" value="Chromosome 12"/>
</dbReference>
<dbReference type="RNAct" id="Q9NRG9">
    <property type="molecule type" value="protein"/>
</dbReference>
<dbReference type="Bgee" id="ENSG00000094914">
    <property type="expression patterns" value="Expressed in right adrenal gland cortex and 175 other cell types or tissues"/>
</dbReference>
<dbReference type="ExpressionAtlas" id="Q9NRG9">
    <property type="expression patterns" value="baseline and differential"/>
</dbReference>
<dbReference type="GO" id="GO:0005813">
    <property type="term" value="C:centrosome"/>
    <property type="evidence" value="ECO:0000314"/>
    <property type="project" value="HPA"/>
</dbReference>
<dbReference type="GO" id="GO:0005829">
    <property type="term" value="C:cytosol"/>
    <property type="evidence" value="ECO:0000314"/>
    <property type="project" value="HPA"/>
</dbReference>
<dbReference type="GO" id="GO:0016020">
    <property type="term" value="C:membrane"/>
    <property type="evidence" value="ECO:0007005"/>
    <property type="project" value="UniProtKB"/>
</dbReference>
<dbReference type="GO" id="GO:0072686">
    <property type="term" value="C:mitotic spindle"/>
    <property type="evidence" value="ECO:0000314"/>
    <property type="project" value="UniProtKB"/>
</dbReference>
<dbReference type="GO" id="GO:0005635">
    <property type="term" value="C:nuclear envelope"/>
    <property type="evidence" value="ECO:0000314"/>
    <property type="project" value="UniProtKB"/>
</dbReference>
<dbReference type="GO" id="GO:0031965">
    <property type="term" value="C:nuclear membrane"/>
    <property type="evidence" value="ECO:0000314"/>
    <property type="project" value="HPA"/>
</dbReference>
<dbReference type="GO" id="GO:0005643">
    <property type="term" value="C:nuclear pore"/>
    <property type="evidence" value="ECO:0000314"/>
    <property type="project" value="UniProtKB"/>
</dbReference>
<dbReference type="GO" id="GO:0005654">
    <property type="term" value="C:nucleoplasm"/>
    <property type="evidence" value="ECO:0000314"/>
    <property type="project" value="HPA"/>
</dbReference>
<dbReference type="GO" id="GO:0005634">
    <property type="term" value="C:nucleus"/>
    <property type="evidence" value="ECO:0007005"/>
    <property type="project" value="UniProtKB"/>
</dbReference>
<dbReference type="GO" id="GO:0000922">
    <property type="term" value="C:spindle pole"/>
    <property type="evidence" value="ECO:0000314"/>
    <property type="project" value="UniProtKB"/>
</dbReference>
<dbReference type="GO" id="GO:0009566">
    <property type="term" value="P:fertilization"/>
    <property type="evidence" value="ECO:0007669"/>
    <property type="project" value="Ensembl"/>
</dbReference>
<dbReference type="GO" id="GO:0006749">
    <property type="term" value="P:glutathione metabolic process"/>
    <property type="evidence" value="ECO:0007669"/>
    <property type="project" value="Ensembl"/>
</dbReference>
<dbReference type="GO" id="GO:0007612">
    <property type="term" value="P:learning"/>
    <property type="evidence" value="ECO:0007669"/>
    <property type="project" value="Ensembl"/>
</dbReference>
<dbReference type="GO" id="GO:0001578">
    <property type="term" value="P:microtubule bundle formation"/>
    <property type="evidence" value="ECO:0000315"/>
    <property type="project" value="UniProtKB"/>
</dbReference>
<dbReference type="GO" id="GO:0090307">
    <property type="term" value="P:mitotic spindle assembly"/>
    <property type="evidence" value="ECO:0000315"/>
    <property type="project" value="UniProtKB"/>
</dbReference>
<dbReference type="GO" id="GO:0051028">
    <property type="term" value="P:mRNA transport"/>
    <property type="evidence" value="ECO:0007669"/>
    <property type="project" value="UniProtKB-KW"/>
</dbReference>
<dbReference type="GO" id="GO:0035264">
    <property type="term" value="P:multicellular organism growth"/>
    <property type="evidence" value="ECO:0007669"/>
    <property type="project" value="Ensembl"/>
</dbReference>
<dbReference type="GO" id="GO:0006913">
    <property type="term" value="P:nucleocytoplasmic transport"/>
    <property type="evidence" value="ECO:0000314"/>
    <property type="project" value="MGI"/>
</dbReference>
<dbReference type="GO" id="GO:0015031">
    <property type="term" value="P:protein transport"/>
    <property type="evidence" value="ECO:0007669"/>
    <property type="project" value="UniProtKB-KW"/>
</dbReference>
<dbReference type="GO" id="GO:0046822">
    <property type="term" value="P:regulation of nucleocytoplasmic transport"/>
    <property type="evidence" value="ECO:0000303"/>
    <property type="project" value="UniProtKB"/>
</dbReference>
<dbReference type="GO" id="GO:0006979">
    <property type="term" value="P:response to oxidative stress"/>
    <property type="evidence" value="ECO:0007669"/>
    <property type="project" value="Ensembl"/>
</dbReference>
<dbReference type="FunFam" id="2.130.10.10:FF:000456">
    <property type="entry name" value="aladin isoform X3"/>
    <property type="match status" value="1"/>
</dbReference>
<dbReference type="Gene3D" id="2.130.10.10">
    <property type="entry name" value="YVTN repeat-like/Quinoprotein amine dehydrogenase"/>
    <property type="match status" value="2"/>
</dbReference>
<dbReference type="InterPro" id="IPR045139">
    <property type="entry name" value="Aladin"/>
</dbReference>
<dbReference type="InterPro" id="IPR015943">
    <property type="entry name" value="WD40/YVTN_repeat-like_dom_sf"/>
</dbReference>
<dbReference type="InterPro" id="IPR019775">
    <property type="entry name" value="WD40_repeat_CS"/>
</dbReference>
<dbReference type="InterPro" id="IPR001680">
    <property type="entry name" value="WD40_rpt"/>
</dbReference>
<dbReference type="PANTHER" id="PTHR14494:SF0">
    <property type="entry name" value="ALADIN"/>
    <property type="match status" value="1"/>
</dbReference>
<dbReference type="PANTHER" id="PTHR14494">
    <property type="entry name" value="ALADIN/ADRACALIN/AAAS"/>
    <property type="match status" value="1"/>
</dbReference>
<dbReference type="Pfam" id="PF25460">
    <property type="entry name" value="Beta-prop_Aladin"/>
    <property type="match status" value="1"/>
</dbReference>
<dbReference type="SMART" id="SM00320">
    <property type="entry name" value="WD40"/>
    <property type="match status" value="4"/>
</dbReference>
<dbReference type="SUPFAM" id="SSF82171">
    <property type="entry name" value="DPP6 N-terminal domain-like"/>
    <property type="match status" value="1"/>
</dbReference>
<dbReference type="PROSITE" id="PS00678">
    <property type="entry name" value="WD_REPEATS_1"/>
    <property type="match status" value="1"/>
</dbReference>
<dbReference type="PROSITE" id="PS50082">
    <property type="entry name" value="WD_REPEATS_2"/>
    <property type="match status" value="1"/>
</dbReference>
<dbReference type="PROSITE" id="PS50294">
    <property type="entry name" value="WD_REPEATS_REGION"/>
    <property type="match status" value="1"/>
</dbReference>
<comment type="function">
    <text evidence="4 5 6 8">Plays a role in the normal development of the peripheral and central nervous system (PubMed:11062474, PubMed:11159947, PubMed:16022285). Required for the correct localization of aurora kinase AURKA and the microtubule minus end-binding protein NUMA1 as well as a subset of AURKA targets which ensures proper spindle formation and timely chromosome alignment (PubMed:26246606).</text>
</comment>
<comment type="subunit">
    <text evidence="7 8 9">Interacts with NDC1, the interaction is required for nuclear pore localization (PubMed:19782045). Interacts with the inactive form aurora kinase AURKA (PubMed:26246606). Interacts with PGRMC2 (PubMed:27754849).</text>
</comment>
<comment type="subcellular location">
    <subcellularLocation>
        <location evidence="7">Nucleus</location>
        <location evidence="7">Nuclear pore complex</location>
    </subcellularLocation>
    <subcellularLocation>
        <location evidence="8">Cytoplasm</location>
        <location evidence="8">Cytoskeleton</location>
        <location evidence="8">Spindle pole</location>
    </subcellularLocation>
    <subcellularLocation>
        <location evidence="9">Nucleus envelope</location>
    </subcellularLocation>
    <text evidence="8">In metaphase cells localizes within the spindle with some accumulation around spindle poles, with the highest concentration between the centrosome and metaphase plate (PubMed:26246606). The localization to the spindle is microtubule-mediated (PubMed:26246606).</text>
</comment>
<comment type="alternative products">
    <event type="alternative splicing"/>
    <isoform>
        <id>Q9NRG9-1</id>
        <name>1</name>
        <name>AAAS-v1</name>
        <sequence type="displayed"/>
    </isoform>
    <isoform>
        <id>Q9NRG9-2</id>
        <name>2</name>
        <name>AAAS-v2</name>
        <sequence type="described" ref="VSP_043014"/>
    </isoform>
</comment>
<comment type="tissue specificity">
    <text evidence="5 6">Widely expressed (PubMed:11159947, PubMed:16022285). Particularly abundant in cerebellum, corpus callosum, adrenal gland, pituitary gland, gastrointestinal structures and fetal lung (PubMed:11159947).</text>
</comment>
<comment type="disease" evidence="5">
    <disease id="DI-00018">
        <name>Achalasia-addisonianism-alacrima syndrome</name>
        <acronym>AAAS</acronym>
        <description>An autosomal recessive disorder characterized by adreno-corticotropic hormone (ACTH)-resistant adrenal failure, achalasia of the esophageal cardia and alacrima. The syndrome is associated with variable and progressive neurological impairment involving the central, peripheral, and autonomic nervous system. Other features such as palmoplantar hyperkeratosis, short stature, facial dysmorphy and osteoporosis may also be present.</description>
        <dbReference type="MIM" id="231550"/>
    </disease>
    <text>The disease is caused by variants affecting the gene represented in this entry.</text>
</comment>
<comment type="miscellaneous">
    <molecule>Isoform 2</molecule>
    <text evidence="11">Ubiquitously expressed.</text>
</comment>
<gene>
    <name type="primary">AAAS</name>
    <name type="synonym">ADRACALA</name>
    <name type="ORF">GL003</name>
</gene>
<evidence type="ECO:0000250" key="1">
    <source>
        <dbReference type="UniProtKB" id="P58742"/>
    </source>
</evidence>
<evidence type="ECO:0000255" key="2"/>
<evidence type="ECO:0000256" key="3">
    <source>
        <dbReference type="SAM" id="MobiDB-lite"/>
    </source>
</evidence>
<evidence type="ECO:0000269" key="4">
    <source>
    </source>
</evidence>
<evidence type="ECO:0000269" key="5">
    <source>
    </source>
</evidence>
<evidence type="ECO:0000269" key="6">
    <source>
    </source>
</evidence>
<evidence type="ECO:0000269" key="7">
    <source>
    </source>
</evidence>
<evidence type="ECO:0000269" key="8">
    <source>
    </source>
</evidence>
<evidence type="ECO:0000269" key="9">
    <source>
    </source>
</evidence>
<evidence type="ECO:0000303" key="10">
    <source>
    </source>
</evidence>
<evidence type="ECO:0000305" key="11"/>
<evidence type="ECO:0007744" key="12">
    <source>
    </source>
</evidence>
<evidence type="ECO:0007744" key="13">
    <source>
    </source>
</evidence>
<evidence type="ECO:0007744" key="14">
    <source>
    </source>
</evidence>
<evidence type="ECO:0007744" key="15">
    <source>
    </source>
</evidence>
<evidence type="ECO:0007744" key="16">
    <source>
    </source>
</evidence>
<keyword id="KW-0002">3D-structure</keyword>
<keyword id="KW-0007">Acetylation</keyword>
<keyword id="KW-0025">Alternative splicing</keyword>
<keyword id="KW-0963">Cytoplasm</keyword>
<keyword id="KW-0206">Cytoskeleton</keyword>
<keyword id="KW-0225">Disease variant</keyword>
<keyword id="KW-0509">mRNA transport</keyword>
<keyword id="KW-0906">Nuclear pore complex</keyword>
<keyword id="KW-0539">Nucleus</keyword>
<keyword id="KW-0597">Phosphoprotein</keyword>
<keyword id="KW-0653">Protein transport</keyword>
<keyword id="KW-1267">Proteomics identification</keyword>
<keyword id="KW-1185">Reference proteome</keyword>
<keyword id="KW-0677">Repeat</keyword>
<keyword id="KW-0811">Translocation</keyword>
<keyword id="KW-0813">Transport</keyword>
<keyword id="KW-0853">WD repeat</keyword>
<feature type="initiator methionine" description="Removed" evidence="14 15">
    <location>
        <position position="1"/>
    </location>
</feature>
<feature type="chain" id="PRO_0000050828" description="Aladin">
    <location>
        <begin position="2"/>
        <end position="546"/>
    </location>
</feature>
<feature type="repeat" description="WD 1">
    <location>
        <begin position="142"/>
        <end position="180"/>
    </location>
</feature>
<feature type="repeat" description="WD 2">
    <location>
        <begin position="183"/>
        <end position="222"/>
    </location>
</feature>
<feature type="repeat" description="WD 3">
    <location>
        <begin position="234"/>
        <end position="274"/>
    </location>
</feature>
<feature type="repeat" description="WD 4">
    <location>
        <begin position="280"/>
        <end position="316"/>
    </location>
</feature>
<feature type="repeat" description="WD 5">
    <location>
        <begin position="324"/>
        <end position="380"/>
    </location>
</feature>
<feature type="repeat" description="WD 6">
    <location>
        <begin position="386"/>
        <end position="433"/>
    </location>
</feature>
<feature type="repeat" description="WD 7">
    <location>
        <begin position="442"/>
        <end position="482"/>
    </location>
</feature>
<feature type="region of interest" description="Disordered" evidence="3">
    <location>
        <begin position="500"/>
        <end position="546"/>
    </location>
</feature>
<feature type="short sequence motif" description="Microbody targeting signal" evidence="2">
    <location>
        <begin position="544"/>
        <end position="546"/>
    </location>
</feature>
<feature type="compositionally biased region" description="Pro residues" evidence="3">
    <location>
        <begin position="529"/>
        <end position="539"/>
    </location>
</feature>
<feature type="modified residue" description="N-acetylcysteine" evidence="14 15">
    <location>
        <position position="2"/>
    </location>
</feature>
<feature type="modified residue" description="Phosphoserine" evidence="12 13">
    <location>
        <position position="33"/>
    </location>
</feature>
<feature type="modified residue" description="Phosphoserine" evidence="13 16">
    <location>
        <position position="495"/>
    </location>
</feature>
<feature type="modified residue" description="Phosphoserine" evidence="16">
    <location>
        <position position="511"/>
    </location>
</feature>
<feature type="modified residue" description="Phosphoserine" evidence="1">
    <location>
        <position position="522"/>
    </location>
</feature>
<feature type="modified residue" description="Phosphoserine" evidence="1">
    <location>
        <position position="525"/>
    </location>
</feature>
<feature type="modified residue" description="Phosphoserine" evidence="16">
    <location>
        <position position="541"/>
    </location>
</feature>
<feature type="splice variant" id="VSP_043014" description="In isoform 2." evidence="10">
    <original>WSSCCLRVFAWHPHTNKFAVALLDDSVRVYNASS</original>
    <variation>C</variation>
    <location>
        <begin position="149"/>
        <end position="182"/>
    </location>
</feature>
<feature type="sequence variant" id="VAR_012804" description="In AAAS; dbSNP:rs121918549." evidence="5">
    <original>Q</original>
    <variation>K</variation>
    <location>
        <position position="15"/>
    </location>
</feature>
<feature type="sequence variant" id="VAR_080414" description="In AAAS." evidence="5">
    <location>
        <begin position="84"/>
        <end position="546"/>
    </location>
</feature>
<feature type="sequence variant" id="VAR_037060" description="In dbSNP:rs13330.">
    <original>K</original>
    <variation>M</variation>
    <location>
        <position position="108"/>
    </location>
</feature>
<feature type="sequence variant" id="VAR_012805" description="In AAAS; dbSNP:rs1297831120." evidence="5">
    <original>H</original>
    <variation>R</variation>
    <location>
        <position position="160"/>
    </location>
</feature>
<feature type="sequence variant" id="VAR_012806" description="In AAAS; dbSNP:rs121918550." evidence="5">
    <original>S</original>
    <variation>P</variation>
    <location>
        <position position="263"/>
    </location>
</feature>
<feature type="sequence variant" id="VAR_080415" description="In AAAS; uncertain significance." evidence="5">
    <location>
        <begin position="286"/>
        <end position="546"/>
    </location>
</feature>
<feature type="sequence variant" id="VAR_080416" description="In AAAS; uncertain significance." evidence="5">
    <location>
        <begin position="342"/>
        <end position="546"/>
    </location>
</feature>
<feature type="sequence conflict" description="In Ref. 5; BAA91394." evidence="11" ref="5">
    <original>S</original>
    <variation>P</variation>
    <location>
        <position position="122"/>
    </location>
</feature>
<feature type="sequence conflict" description="In Ref. 5; BAA91394." evidence="11" ref="5">
    <original>R</original>
    <variation>K</variation>
    <location>
        <position position="135"/>
    </location>
</feature>
<feature type="sequence conflict" description="In Ref. 5; BAA91394." evidence="11" ref="5">
    <original>I</original>
    <variation>V</variation>
    <location>
        <position position="479"/>
    </location>
</feature>
<protein>
    <recommendedName>
        <fullName>Aladin</fullName>
    </recommendedName>
    <alternativeName>
        <fullName>Adracalin</fullName>
    </alternativeName>
</protein>
<name>AAAS_HUMAN</name>
<accession>Q9NRG9</accession>
<accession>Q5JB47</accession>
<accession>Q9NWI6</accession>
<accession>Q9UG19</accession>
<proteinExistence type="evidence at protein level"/>